<proteinExistence type="inferred from homology"/>
<accession>B8ZRZ2</accession>
<keyword id="KW-0227">DNA damage</keyword>
<keyword id="KW-0234">DNA repair</keyword>
<keyword id="KW-0238">DNA-binding</keyword>
<keyword id="KW-0326">Glycosidase</keyword>
<keyword id="KW-0378">Hydrolase</keyword>
<keyword id="KW-0456">Lyase</keyword>
<keyword id="KW-0479">Metal-binding</keyword>
<keyword id="KW-0511">Multifunctional enzyme</keyword>
<keyword id="KW-0862">Zinc</keyword>
<keyword id="KW-0863">Zinc-finger</keyword>
<feature type="initiator methionine" description="Removed" evidence="1">
    <location>
        <position position="1"/>
    </location>
</feature>
<feature type="chain" id="PRO_1000118897" description="Formamidopyrimidine-DNA glycosylase">
    <location>
        <begin position="2"/>
        <end position="282"/>
    </location>
</feature>
<feature type="zinc finger region" description="FPG-type" evidence="2">
    <location>
        <begin position="244"/>
        <end position="278"/>
    </location>
</feature>
<feature type="active site" description="Schiff-base intermediate with DNA" evidence="2">
    <location>
        <position position="2"/>
    </location>
</feature>
<feature type="active site" description="Proton donor" evidence="2">
    <location>
        <position position="3"/>
    </location>
</feature>
<feature type="active site" description="Proton donor; for beta-elimination activity" evidence="2">
    <location>
        <position position="61"/>
    </location>
</feature>
<feature type="active site" description="Proton donor; for delta-elimination activity" evidence="2">
    <location>
        <position position="268"/>
    </location>
</feature>
<feature type="binding site" evidence="2">
    <location>
        <position position="93"/>
    </location>
    <ligand>
        <name>DNA</name>
        <dbReference type="ChEBI" id="CHEBI:16991"/>
    </ligand>
</feature>
<feature type="binding site" evidence="2">
    <location>
        <position position="112"/>
    </location>
    <ligand>
        <name>DNA</name>
        <dbReference type="ChEBI" id="CHEBI:16991"/>
    </ligand>
</feature>
<feature type="binding site" evidence="2">
    <location>
        <position position="158"/>
    </location>
    <ligand>
        <name>DNA</name>
        <dbReference type="ChEBI" id="CHEBI:16991"/>
    </ligand>
</feature>
<protein>
    <recommendedName>
        <fullName evidence="2">Formamidopyrimidine-DNA glycosylase</fullName>
        <shortName evidence="2">Fapy-DNA glycosylase</shortName>
        <ecNumber evidence="2">3.2.2.23</ecNumber>
    </recommendedName>
    <alternativeName>
        <fullName evidence="2">DNA-(apurinic or apyrimidinic site) lyase MutM</fullName>
        <shortName evidence="2">AP lyase MutM</shortName>
        <ecNumber evidence="2">4.2.99.18</ecNumber>
    </alternativeName>
</protein>
<organism>
    <name type="scientific">Mycobacterium leprae (strain Br4923)</name>
    <dbReference type="NCBI Taxonomy" id="561304"/>
    <lineage>
        <taxon>Bacteria</taxon>
        <taxon>Bacillati</taxon>
        <taxon>Actinomycetota</taxon>
        <taxon>Actinomycetes</taxon>
        <taxon>Mycobacteriales</taxon>
        <taxon>Mycobacteriaceae</taxon>
        <taxon>Mycobacterium</taxon>
    </lineage>
</organism>
<comment type="function">
    <text evidence="2">Involved in base excision repair of DNA damaged by oxidation or by mutagenic agents. Acts as a DNA glycosylase that recognizes and removes damaged bases. Has a preference for oxidized purines, such as 7,8-dihydro-8-oxoguanine (8-oxoG). Has AP (apurinic/apyrimidinic) lyase activity and introduces nicks in the DNA strand. Cleaves the DNA backbone by beta-delta elimination to generate a single-strand break at the site of the removed base with both 3'- and 5'-phosphates.</text>
</comment>
<comment type="catalytic activity">
    <reaction evidence="2">
        <text>Hydrolysis of DNA containing ring-opened 7-methylguanine residues, releasing 2,6-diamino-4-hydroxy-5-(N-methyl)formamidopyrimidine.</text>
        <dbReference type="EC" id="3.2.2.23"/>
    </reaction>
</comment>
<comment type="catalytic activity">
    <reaction evidence="2">
        <text>2'-deoxyribonucleotide-(2'-deoxyribose 5'-phosphate)-2'-deoxyribonucleotide-DNA = a 3'-end 2'-deoxyribonucleotide-(2,3-dehydro-2,3-deoxyribose 5'-phosphate)-DNA + a 5'-end 5'-phospho-2'-deoxyribonucleoside-DNA + H(+)</text>
        <dbReference type="Rhea" id="RHEA:66592"/>
        <dbReference type="Rhea" id="RHEA-COMP:13180"/>
        <dbReference type="Rhea" id="RHEA-COMP:16897"/>
        <dbReference type="Rhea" id="RHEA-COMP:17067"/>
        <dbReference type="ChEBI" id="CHEBI:15378"/>
        <dbReference type="ChEBI" id="CHEBI:136412"/>
        <dbReference type="ChEBI" id="CHEBI:157695"/>
        <dbReference type="ChEBI" id="CHEBI:167181"/>
        <dbReference type="EC" id="4.2.99.18"/>
    </reaction>
</comment>
<comment type="cofactor">
    <cofactor evidence="2">
        <name>Zn(2+)</name>
        <dbReference type="ChEBI" id="CHEBI:29105"/>
    </cofactor>
    <text evidence="2">Binds 1 zinc ion per subunit.</text>
</comment>
<comment type="subunit">
    <text evidence="2">Monomer.</text>
</comment>
<comment type="similarity">
    <text evidence="2">Belongs to the FPG family.</text>
</comment>
<gene>
    <name evidence="2" type="primary">mutM</name>
    <name evidence="2" type="synonym">fpg</name>
    <name type="ordered locus">MLBr01658</name>
</gene>
<reference key="1">
    <citation type="journal article" date="2009" name="Nat. Genet.">
        <title>Comparative genomic and phylogeographic analysis of Mycobacterium leprae.</title>
        <authorList>
            <person name="Monot M."/>
            <person name="Honore N."/>
            <person name="Garnier T."/>
            <person name="Zidane N."/>
            <person name="Sherafi D."/>
            <person name="Paniz-Mondolfi A."/>
            <person name="Matsuoka M."/>
            <person name="Taylor G.M."/>
            <person name="Donoghue H.D."/>
            <person name="Bouwman A."/>
            <person name="Mays S."/>
            <person name="Watson C."/>
            <person name="Lockwood D."/>
            <person name="Khamispour A."/>
            <person name="Dowlati Y."/>
            <person name="Jianping S."/>
            <person name="Rea T.H."/>
            <person name="Vera-Cabrera L."/>
            <person name="Stefani M.M."/>
            <person name="Banu S."/>
            <person name="Macdonald M."/>
            <person name="Sapkota B.R."/>
            <person name="Spencer J.S."/>
            <person name="Thomas J."/>
            <person name="Harshman K."/>
            <person name="Singh P."/>
            <person name="Busso P."/>
            <person name="Gattiker A."/>
            <person name="Rougemont J."/>
            <person name="Brennan P.J."/>
            <person name="Cole S.T."/>
        </authorList>
    </citation>
    <scope>NUCLEOTIDE SEQUENCE [LARGE SCALE GENOMIC DNA]</scope>
    <source>
        <strain>Br4923</strain>
    </source>
</reference>
<dbReference type="EC" id="3.2.2.23" evidence="2"/>
<dbReference type="EC" id="4.2.99.18" evidence="2"/>
<dbReference type="EMBL" id="FM211192">
    <property type="protein sequence ID" value="CAR71753.1"/>
    <property type="molecule type" value="Genomic_DNA"/>
</dbReference>
<dbReference type="SMR" id="B8ZRZ2"/>
<dbReference type="KEGG" id="mlb:MLBr01658"/>
<dbReference type="HOGENOM" id="CLU_038423_1_2_11"/>
<dbReference type="Proteomes" id="UP000006900">
    <property type="component" value="Chromosome"/>
</dbReference>
<dbReference type="GO" id="GO:0034039">
    <property type="term" value="F:8-oxo-7,8-dihydroguanine DNA N-glycosylase activity"/>
    <property type="evidence" value="ECO:0007669"/>
    <property type="project" value="TreeGrafter"/>
</dbReference>
<dbReference type="GO" id="GO:0140078">
    <property type="term" value="F:class I DNA-(apurinic or apyrimidinic site) endonuclease activity"/>
    <property type="evidence" value="ECO:0007669"/>
    <property type="project" value="UniProtKB-EC"/>
</dbReference>
<dbReference type="GO" id="GO:0003684">
    <property type="term" value="F:damaged DNA binding"/>
    <property type="evidence" value="ECO:0007669"/>
    <property type="project" value="InterPro"/>
</dbReference>
<dbReference type="GO" id="GO:0008270">
    <property type="term" value="F:zinc ion binding"/>
    <property type="evidence" value="ECO:0007669"/>
    <property type="project" value="UniProtKB-UniRule"/>
</dbReference>
<dbReference type="GO" id="GO:0006284">
    <property type="term" value="P:base-excision repair"/>
    <property type="evidence" value="ECO:0007669"/>
    <property type="project" value="InterPro"/>
</dbReference>
<dbReference type="CDD" id="cd08966">
    <property type="entry name" value="EcFpg-like_N"/>
    <property type="match status" value="1"/>
</dbReference>
<dbReference type="FunFam" id="1.10.8.50:FF:000003">
    <property type="entry name" value="Formamidopyrimidine-DNA glycosylase"/>
    <property type="match status" value="1"/>
</dbReference>
<dbReference type="FunFam" id="3.20.190.10:FF:000006">
    <property type="entry name" value="Formamidopyrimidine-DNA glycosylase"/>
    <property type="match status" value="1"/>
</dbReference>
<dbReference type="Gene3D" id="1.10.8.50">
    <property type="match status" value="1"/>
</dbReference>
<dbReference type="Gene3D" id="3.20.190.10">
    <property type="entry name" value="MutM-like, N-terminal"/>
    <property type="match status" value="1"/>
</dbReference>
<dbReference type="HAMAP" id="MF_00103">
    <property type="entry name" value="Fapy_DNA_glycosyl"/>
    <property type="match status" value="1"/>
</dbReference>
<dbReference type="InterPro" id="IPR015886">
    <property type="entry name" value="DNA_glyclase/AP_lyase_DNA-bd"/>
</dbReference>
<dbReference type="InterPro" id="IPR015887">
    <property type="entry name" value="DNA_glyclase_Znf_dom_DNA_BS"/>
</dbReference>
<dbReference type="InterPro" id="IPR020629">
    <property type="entry name" value="Formamido-pyr_DNA_Glyclase"/>
</dbReference>
<dbReference type="InterPro" id="IPR012319">
    <property type="entry name" value="FPG_cat"/>
</dbReference>
<dbReference type="InterPro" id="IPR035937">
    <property type="entry name" value="MutM-like_N-ter"/>
</dbReference>
<dbReference type="InterPro" id="IPR010979">
    <property type="entry name" value="Ribosomal_uS13-like_H2TH"/>
</dbReference>
<dbReference type="InterPro" id="IPR000214">
    <property type="entry name" value="Znf_DNA_glyclase/AP_lyase"/>
</dbReference>
<dbReference type="InterPro" id="IPR010663">
    <property type="entry name" value="Znf_FPG/IleRS"/>
</dbReference>
<dbReference type="NCBIfam" id="TIGR00577">
    <property type="entry name" value="fpg"/>
    <property type="match status" value="1"/>
</dbReference>
<dbReference type="NCBIfam" id="NF002211">
    <property type="entry name" value="PRK01103.1"/>
    <property type="match status" value="1"/>
</dbReference>
<dbReference type="PANTHER" id="PTHR22993">
    <property type="entry name" value="FORMAMIDOPYRIMIDINE-DNA GLYCOSYLASE"/>
    <property type="match status" value="1"/>
</dbReference>
<dbReference type="PANTHER" id="PTHR22993:SF9">
    <property type="entry name" value="FORMAMIDOPYRIMIDINE-DNA GLYCOSYLASE"/>
    <property type="match status" value="1"/>
</dbReference>
<dbReference type="Pfam" id="PF01149">
    <property type="entry name" value="Fapy_DNA_glyco"/>
    <property type="match status" value="1"/>
</dbReference>
<dbReference type="Pfam" id="PF06831">
    <property type="entry name" value="H2TH"/>
    <property type="match status" value="1"/>
</dbReference>
<dbReference type="Pfam" id="PF06827">
    <property type="entry name" value="zf-FPG_IleRS"/>
    <property type="match status" value="1"/>
</dbReference>
<dbReference type="SMART" id="SM00898">
    <property type="entry name" value="Fapy_DNA_glyco"/>
    <property type="match status" value="1"/>
</dbReference>
<dbReference type="SMART" id="SM01232">
    <property type="entry name" value="H2TH"/>
    <property type="match status" value="1"/>
</dbReference>
<dbReference type="SUPFAM" id="SSF57716">
    <property type="entry name" value="Glucocorticoid receptor-like (DNA-binding domain)"/>
    <property type="match status" value="1"/>
</dbReference>
<dbReference type="SUPFAM" id="SSF81624">
    <property type="entry name" value="N-terminal domain of MutM-like DNA repair proteins"/>
    <property type="match status" value="1"/>
</dbReference>
<dbReference type="SUPFAM" id="SSF46946">
    <property type="entry name" value="S13-like H2TH domain"/>
    <property type="match status" value="1"/>
</dbReference>
<dbReference type="PROSITE" id="PS51068">
    <property type="entry name" value="FPG_CAT"/>
    <property type="match status" value="1"/>
</dbReference>
<dbReference type="PROSITE" id="PS01242">
    <property type="entry name" value="ZF_FPG_1"/>
    <property type="match status" value="1"/>
</dbReference>
<dbReference type="PROSITE" id="PS51066">
    <property type="entry name" value="ZF_FPG_2"/>
    <property type="match status" value="1"/>
</dbReference>
<name>FPG_MYCLB</name>
<evidence type="ECO:0000250" key="1"/>
<evidence type="ECO:0000255" key="2">
    <source>
        <dbReference type="HAMAP-Rule" id="MF_00103"/>
    </source>
</evidence>
<sequence length="282" mass="31515">MPELPEVEVVRRGLQDYIVGKTITAVRVHHPRAVRRHVAGPTDLTNRLLGTRINGIDRRGKYLWFLLDTDIALVVHLGMSGQMLLGTVPRVDHVRISALFDDGTVLNFTDQRTLGGWLLADLMTVDGSVLPVPVAHLARDPFDPRFDVEAVVKVLRCKHSELKRQLLDQQTVSGIGNIYADEALWRAEVHGARIAATLTRRQLAAVLDAAADVMRDSLAKGGTSFDSLYVNVNGESGYFDRSLDAYGREGEGCRRCGAVMHREKFMNRSSFYCPRCQPRPRR</sequence>